<accession>P28980</accession>
<accession>Q6S6R1</accession>
<sequence length="100" mass="10802">MLSTRFVTLAILACLLVVLGLARGAGGDPGVKQRIDVAREEERRDFWHAACSGHGFPITTPSTAAILFYVSLLAVGVAVACQAYRAVLRIVTLEMLQHLH</sequence>
<keyword id="KW-1015">Disulfide bond</keyword>
<keyword id="KW-1040">Host Golgi apparatus</keyword>
<keyword id="KW-1043">Host membrane</keyword>
<keyword id="KW-0472">Membrane</keyword>
<keyword id="KW-1185">Reference proteome</keyword>
<keyword id="KW-0732">Signal</keyword>
<keyword id="KW-0812">Transmembrane</keyword>
<keyword id="KW-1133">Transmembrane helix</keyword>
<keyword id="KW-0261">Viral envelope protein</keyword>
<keyword id="KW-0946">Virion</keyword>
<gene>
    <name evidence="1" type="primary">gN</name>
    <name type="ordered locus">10</name>
</gene>
<reference key="1">
    <citation type="journal article" date="1992" name="Virology">
        <title>The DNA sequence of equine herpesvirus-1.</title>
        <authorList>
            <person name="Telford E.A.R."/>
            <person name="Watson M.S."/>
            <person name="McBride K."/>
            <person name="Davison A.J."/>
        </authorList>
    </citation>
    <scope>NUCLEOTIDE SEQUENCE [LARGE SCALE GENOMIC DNA]</scope>
</reference>
<reference key="2">
    <citation type="journal article" date="2002" name="J. Virol.">
        <title>The gene 10 (UL49.5) product of equine herpesvirus 1 is necessary and sufficient for functional processing of glycoprotein M.</title>
        <authorList>
            <person name="Rudolph J."/>
            <person name="Seyboldt C."/>
            <person name="Granzow H."/>
            <person name="Osterrieder N."/>
        </authorList>
    </citation>
    <scope>SUBUNIT</scope>
</reference>
<evidence type="ECO:0000255" key="1">
    <source>
        <dbReference type="HAMAP-Rule" id="MF_04037"/>
    </source>
</evidence>
<evidence type="ECO:0000269" key="2">
    <source>
    </source>
</evidence>
<feature type="signal peptide" evidence="1">
    <location>
        <begin position="1"/>
        <end position="27"/>
    </location>
</feature>
<feature type="chain" id="PRO_0000116163" description="Envelope glycoprotein N" evidence="1">
    <location>
        <begin position="28"/>
        <end position="100"/>
    </location>
</feature>
<feature type="topological domain" description="Virion surface" evidence="1">
    <location>
        <begin position="28"/>
        <end position="63"/>
    </location>
</feature>
<feature type="transmembrane region" description="Helical" evidence="1">
    <location>
        <begin position="64"/>
        <end position="84"/>
    </location>
</feature>
<feature type="topological domain" description="Intravirion" evidence="1">
    <location>
        <begin position="85"/>
        <end position="100"/>
    </location>
</feature>
<feature type="disulfide bond" description="Interchain (with gM)" evidence="1">
    <location>
        <position position="51"/>
    </location>
</feature>
<proteinExistence type="evidence at protein level"/>
<protein>
    <recommendedName>
        <fullName evidence="1">Envelope glycoprotein N</fullName>
    </recommendedName>
</protein>
<name>GN_EHV1B</name>
<dbReference type="EMBL" id="AY665713">
    <property type="protein sequence ID" value="AAT67267.1"/>
    <property type="molecule type" value="Genomic_DNA"/>
</dbReference>
<dbReference type="PIR" id="B36796">
    <property type="entry name" value="B36796"/>
</dbReference>
<dbReference type="SMR" id="P28980"/>
<dbReference type="KEGG" id="vg:1487565"/>
<dbReference type="Proteomes" id="UP000001189">
    <property type="component" value="Segment"/>
</dbReference>
<dbReference type="GO" id="GO:0044177">
    <property type="term" value="C:host cell Golgi apparatus"/>
    <property type="evidence" value="ECO:0007669"/>
    <property type="project" value="UniProtKB-SubCell"/>
</dbReference>
<dbReference type="GO" id="GO:0033644">
    <property type="term" value="C:host cell membrane"/>
    <property type="evidence" value="ECO:0007669"/>
    <property type="project" value="UniProtKB-SubCell"/>
</dbReference>
<dbReference type="GO" id="GO:0016020">
    <property type="term" value="C:membrane"/>
    <property type="evidence" value="ECO:0007669"/>
    <property type="project" value="UniProtKB-KW"/>
</dbReference>
<dbReference type="GO" id="GO:0019031">
    <property type="term" value="C:viral envelope"/>
    <property type="evidence" value="ECO:0007669"/>
    <property type="project" value="UniProtKB-KW"/>
</dbReference>
<dbReference type="GO" id="GO:0055036">
    <property type="term" value="C:virion membrane"/>
    <property type="evidence" value="ECO:0007669"/>
    <property type="project" value="UniProtKB-SubCell"/>
</dbReference>
<dbReference type="HAMAP" id="MF_04037">
    <property type="entry name" value="HSV_GN"/>
    <property type="match status" value="1"/>
</dbReference>
<dbReference type="InterPro" id="IPR008647">
    <property type="entry name" value="GN_domain"/>
</dbReference>
<dbReference type="InterPro" id="IPR034707">
    <property type="entry name" value="HSV_GN"/>
</dbReference>
<dbReference type="Pfam" id="PF05702">
    <property type="entry name" value="Herpes_UL49_5"/>
    <property type="match status" value="1"/>
</dbReference>
<organismHost>
    <name type="scientific">Equus caballus</name>
    <name type="common">Horse</name>
    <dbReference type="NCBI Taxonomy" id="9796"/>
</organismHost>
<comment type="function">
    <text evidence="1 2">Envelope glycoprotein necessary for proper maturation of gM and modulation of its membrane fusion activity. Also plays a critical role in virion morphogenesis.</text>
</comment>
<comment type="subunit">
    <text evidence="1">Interacts (via N-terminus) with gM (via N-terminus). The gM-gN heterodimer forms the gCII complex.</text>
</comment>
<comment type="subcellular location">
    <subcellularLocation>
        <location evidence="1">Virion membrane</location>
        <topology evidence="1">Single-pass type I membrane protein</topology>
    </subcellularLocation>
    <subcellularLocation>
        <location evidence="1">Host membrane</location>
        <topology evidence="1">Single-pass type I membrane protein</topology>
    </subcellularLocation>
    <subcellularLocation>
        <location evidence="1">Host Golgi apparatus</location>
        <location evidence="1">Host trans-Golgi network</location>
    </subcellularLocation>
    <text evidence="1">When coexpressed with gM, localizes in the host trans-Golgi network.</text>
</comment>
<comment type="similarity">
    <text evidence="1">Belongs to the herpesviridae glycoprotein N family.</text>
</comment>
<organism>
    <name type="scientific">Equine herpesvirus 1 (strain Ab4p)</name>
    <name type="common">EHV-1</name>
    <name type="synonym">Equine abortion virus</name>
    <dbReference type="NCBI Taxonomy" id="31520"/>
    <lineage>
        <taxon>Viruses</taxon>
        <taxon>Duplodnaviria</taxon>
        <taxon>Heunggongvirae</taxon>
        <taxon>Peploviricota</taxon>
        <taxon>Herviviricetes</taxon>
        <taxon>Herpesvirales</taxon>
        <taxon>Orthoherpesviridae</taxon>
        <taxon>Alphaherpesvirinae</taxon>
        <taxon>Varicellovirus</taxon>
        <taxon>Varicellovirus equidalpha1</taxon>
        <taxon>Equid alphaherpesvirus 1</taxon>
    </lineage>
</organism>